<evidence type="ECO:0000250" key="1">
    <source>
        <dbReference type="UniProtKB" id="P62483"/>
    </source>
</evidence>
<evidence type="ECO:0000250" key="2">
    <source>
        <dbReference type="UniProtKB" id="P63144"/>
    </source>
</evidence>
<evidence type="ECO:0000250" key="3">
    <source>
        <dbReference type="UniProtKB" id="Q14722"/>
    </source>
</evidence>
<evidence type="ECO:0000256" key="4">
    <source>
        <dbReference type="SAM" id="MobiDB-lite"/>
    </source>
</evidence>
<evidence type="ECO:0000269" key="5">
    <source>
    </source>
</evidence>
<evidence type="ECO:0000303" key="6">
    <source ref="1"/>
</evidence>
<evidence type="ECO:0000305" key="7"/>
<organism>
    <name type="scientific">Oryctolagus cuniculus</name>
    <name type="common">Rabbit</name>
    <dbReference type="NCBI Taxonomy" id="9986"/>
    <lineage>
        <taxon>Eukaryota</taxon>
        <taxon>Metazoa</taxon>
        <taxon>Chordata</taxon>
        <taxon>Craniata</taxon>
        <taxon>Vertebrata</taxon>
        <taxon>Euteleostomi</taxon>
        <taxon>Mammalia</taxon>
        <taxon>Eutheria</taxon>
        <taxon>Euarchontoglires</taxon>
        <taxon>Glires</taxon>
        <taxon>Lagomorpha</taxon>
        <taxon>Leporidae</taxon>
        <taxon>Oryctolagus</taxon>
    </lineage>
</organism>
<reference key="1">
    <citation type="submission" date="1999-03" db="EMBL/GenBank/DDBJ databases">
        <authorList>
            <person name="Thorneloe K.S."/>
            <person name="Walsh M.P."/>
            <person name="Cole W.C."/>
        </authorList>
    </citation>
    <scope>NUCLEOTIDE SEQUENCE [MRNA] (ISOFORMS KVB1.1; KVB1.2 AND KVB1.3)</scope>
    <source>
        <strain>New Zealand white</strain>
    </source>
</reference>
<reference key="2">
    <citation type="journal article" date="2001" name="Circ. Res.">
        <title>Molecular composition of 4-aminopyridine-sensitive voltage-gated K(+) channels of vascular smooth muscle.</title>
        <authorList>
            <person name="Thorneloe K.S."/>
            <person name="Chen T.T."/>
            <person name="Kerr P.M."/>
            <person name="Grier E.F."/>
            <person name="Horowitz B."/>
            <person name="Cole W.C."/>
            <person name="Walsh M.P."/>
        </authorList>
    </citation>
    <scope>INTERACTION WITH KCNA2 AND KCNA5</scope>
    <scope>SUBCELLULAR LOCATION</scope>
    <scope>TISSUE SPECIFICITY</scope>
</reference>
<proteinExistence type="evidence at protein level"/>
<feature type="chain" id="PRO_0000148742" description="Voltage-gated potassium channel subunit beta-1">
    <location>
        <begin position="1"/>
        <end position="419"/>
    </location>
</feature>
<feature type="region of interest" description="Disordered" evidence="4">
    <location>
        <begin position="1"/>
        <end position="51"/>
    </location>
</feature>
<feature type="compositionally biased region" description="Basic and acidic residues" evidence="4">
    <location>
        <begin position="30"/>
        <end position="43"/>
    </location>
</feature>
<feature type="active site" description="Proton donor/acceptor" evidence="1">
    <location>
        <position position="142"/>
    </location>
</feature>
<feature type="binding site" evidence="1">
    <location>
        <position position="108"/>
    </location>
    <ligand>
        <name>NADP(+)</name>
        <dbReference type="ChEBI" id="CHEBI:58349"/>
    </ligand>
</feature>
<feature type="binding site" evidence="1">
    <location>
        <position position="109"/>
    </location>
    <ligand>
        <name>NADP(+)</name>
        <dbReference type="ChEBI" id="CHEBI:58349"/>
    </ligand>
</feature>
<feature type="binding site" evidence="1">
    <location>
        <position position="115"/>
    </location>
    <ligand>
        <name>NADP(+)</name>
        <dbReference type="ChEBI" id="CHEBI:58349"/>
    </ligand>
</feature>
<feature type="binding site" evidence="1">
    <location>
        <position position="137"/>
    </location>
    <ligand>
        <name>NADP(+)</name>
        <dbReference type="ChEBI" id="CHEBI:58349"/>
    </ligand>
</feature>
<feature type="binding site" evidence="1">
    <location>
        <position position="210"/>
    </location>
    <ligand>
        <name>NADP(+)</name>
        <dbReference type="ChEBI" id="CHEBI:58349"/>
    </ligand>
</feature>
<feature type="binding site" evidence="1">
    <location>
        <position position="240"/>
    </location>
    <ligand>
        <name>NADP(+)</name>
        <dbReference type="ChEBI" id="CHEBI:58349"/>
    </ligand>
</feature>
<feature type="binding site" evidence="1">
    <location>
        <position position="241"/>
    </location>
    <ligand>
        <name>NADP(+)</name>
        <dbReference type="ChEBI" id="CHEBI:58349"/>
    </ligand>
</feature>
<feature type="binding site" evidence="1">
    <location>
        <position position="266"/>
    </location>
    <ligand>
        <name>NADP(+)</name>
        <dbReference type="ChEBI" id="CHEBI:58349"/>
    </ligand>
</feature>
<feature type="binding site" evidence="1">
    <location>
        <position position="295"/>
    </location>
    <ligand>
        <name>NADP(+)</name>
        <dbReference type="ChEBI" id="CHEBI:58349"/>
    </ligand>
</feature>
<feature type="binding site" evidence="1">
    <location>
        <position position="296"/>
    </location>
    <ligand>
        <name>NADP(+)</name>
        <dbReference type="ChEBI" id="CHEBI:58349"/>
    </ligand>
</feature>
<feature type="binding site" evidence="1">
    <location>
        <position position="297"/>
    </location>
    <ligand>
        <name>NADP(+)</name>
        <dbReference type="ChEBI" id="CHEBI:58349"/>
    </ligand>
</feature>
<feature type="binding site" evidence="1">
    <location>
        <position position="298"/>
    </location>
    <ligand>
        <name>NADP(+)</name>
        <dbReference type="ChEBI" id="CHEBI:58349"/>
    </ligand>
</feature>
<feature type="binding site" evidence="1">
    <location>
        <position position="299"/>
    </location>
    <ligand>
        <name>NADP(+)</name>
        <dbReference type="ChEBI" id="CHEBI:58349"/>
    </ligand>
</feature>
<feature type="binding site" evidence="1">
    <location>
        <position position="300"/>
    </location>
    <ligand>
        <name>NADP(+)</name>
        <dbReference type="ChEBI" id="CHEBI:58349"/>
    </ligand>
</feature>
<feature type="binding site" evidence="1">
    <location>
        <position position="306"/>
    </location>
    <ligand>
        <name>NADP(+)</name>
        <dbReference type="ChEBI" id="CHEBI:58349"/>
    </ligand>
</feature>
<feature type="binding site" evidence="1">
    <location>
        <position position="316"/>
    </location>
    <ligand>
        <name>NADP(+)</name>
        <dbReference type="ChEBI" id="CHEBI:58349"/>
    </ligand>
</feature>
<feature type="binding site" evidence="1">
    <location>
        <position position="375"/>
    </location>
    <ligand>
        <name>NADP(+)</name>
        <dbReference type="ChEBI" id="CHEBI:58349"/>
    </ligand>
</feature>
<feature type="binding site" evidence="1">
    <location>
        <position position="377"/>
    </location>
    <ligand>
        <name>NADP(+)</name>
        <dbReference type="ChEBI" id="CHEBI:58349"/>
    </ligand>
</feature>
<feature type="binding site" evidence="1">
    <location>
        <position position="381"/>
    </location>
    <ligand>
        <name>NADP(+)</name>
        <dbReference type="ChEBI" id="CHEBI:58349"/>
    </ligand>
</feature>
<feature type="binding site" evidence="1">
    <location>
        <position position="384"/>
    </location>
    <ligand>
        <name>NADP(+)</name>
        <dbReference type="ChEBI" id="CHEBI:58349"/>
    </ligand>
</feature>
<feature type="binding site" evidence="1">
    <location>
        <position position="385"/>
    </location>
    <ligand>
        <name>NADP(+)</name>
        <dbReference type="ChEBI" id="CHEBI:58349"/>
    </ligand>
</feature>
<feature type="splice variant" id="VSP_001053" description="In isoform KvB1.1." evidence="6">
    <original>MLAARTGAAGSQIAEESSKLRKQAAFSGGSKDRSPKKASENVKDSSLSPSGQSQVRARQLALLREVEMNWYLKLCELSSEHTTAYTTGMPH</original>
    <variation>MQVSIACTEHNLKSRNGEDRLLSKQSSNAPNVVNAARAKFRTVAIIARSLGTFTPQHHISLKESTAKQTGMKY</variation>
    <location>
        <begin position="1"/>
        <end position="91"/>
    </location>
</feature>
<feature type="splice variant" id="VSP_001052" description="In isoform KvB1.2." evidence="6">
    <original>MLAARTGAAGSQIAEESSKLRKQAAFSGGSKDRSPKKASENVKDSSLSPSGQSQVRARQLALLREVEMNWYLKLCELSSEHTTAYTTGMPH</original>
    <variation>MHLYKPACADIPSPKLGLPKSSESALKCRRHLMVTKTQPQAACWPVRPSGPTERKHLERFLCVHGVSLQETTKAETGMAY</variation>
    <location>
        <begin position="1"/>
        <end position="91"/>
    </location>
</feature>
<comment type="function">
    <text evidence="2 3">Regulatory subunit of the voltage-gated potassium (Kv) channels composed of pore-forming and potassium-conducting alpha subunits and of regulatory beta subunits. The beta-1/KCNAB1 cytoplasmic subunit mediates closure of delayed rectifier potassium channels by physically obstructing the pore via its N-terminal domain and increases the speed of channel closure for other family members. Promotes the inactivation of KCNA1, KCNA2, KCNA4, KCNA5 and KCNA6 alpha subunit-containing channels (By similarity). Displays nicotinamide adenine dinucleotide phosphate (NADPH)-dependent aldoketoreductase activity by catalyzing the NADPH-dependent reduction of a variety of endogenous aldehydes and ketones (By similarity). The binding of NADPH is required for efficient down-regulation of potassium channel activity (By similarity). Oxidation of the bound NADPH restrains N-terminal domain from blocking the channel, thereby decreasing N-type inactivation of potassium channel activity (By similarity).</text>
</comment>
<comment type="catalytic activity">
    <reaction evidence="2">
        <text>a primary alcohol + NADP(+) = an aldehyde + NADPH + H(+)</text>
        <dbReference type="Rhea" id="RHEA:15937"/>
        <dbReference type="ChEBI" id="CHEBI:15378"/>
        <dbReference type="ChEBI" id="CHEBI:15734"/>
        <dbReference type="ChEBI" id="CHEBI:17478"/>
        <dbReference type="ChEBI" id="CHEBI:57783"/>
        <dbReference type="ChEBI" id="CHEBI:58349"/>
    </reaction>
    <physiologicalReaction direction="right-to-left" evidence="2">
        <dbReference type="Rhea" id="RHEA:15939"/>
    </physiologicalReaction>
</comment>
<comment type="catalytic activity">
    <reaction evidence="2">
        <text>a secondary alcohol + NADP(+) = a ketone + NADPH + H(+)</text>
        <dbReference type="Rhea" id="RHEA:19257"/>
        <dbReference type="ChEBI" id="CHEBI:15378"/>
        <dbReference type="ChEBI" id="CHEBI:17087"/>
        <dbReference type="ChEBI" id="CHEBI:35681"/>
        <dbReference type="ChEBI" id="CHEBI:57783"/>
        <dbReference type="ChEBI" id="CHEBI:58349"/>
    </reaction>
    <physiologicalReaction direction="right-to-left" evidence="2">
        <dbReference type="Rhea" id="RHEA:19259"/>
    </physiologicalReaction>
</comment>
<comment type="subunit">
    <text evidence="2 5 7">Homotetramer (By similarity). Interaction with tetrameric potassium channel alpha subunits gives rise to a heterooctamer (Probable). Identified in potassium channel complexes containing KCNA1, KCNA2, KCNA4, KCNA5, KCNA6, KCNAB1 and KCNAB2 (PubMed:11717160). Part of a complex containing KCNA1, KCNA4 and LGI1; interaction with LGI1 inhibits down-regulation of KCNA1 channel activity. Interacts with the dimer formed by GNB1 and GNG2; this enhances KCNA1 binding. Interacts with SQSTM1 (By similarity).</text>
</comment>
<comment type="subcellular location">
    <subcellularLocation>
        <location evidence="5">Cytoplasm</location>
    </subcellularLocation>
    <subcellularLocation>
        <location evidence="2">Membrane</location>
        <topology evidence="2">Peripheral membrane protein</topology>
        <orientation evidence="2">Cytoplasmic side</orientation>
    </subcellularLocation>
    <subcellularLocation>
        <location evidence="3">Cell membrane</location>
        <topology evidence="3">Peripheral membrane protein</topology>
        <orientation evidence="3">Cytoplasmic side</orientation>
    </subcellularLocation>
    <text evidence="3">Recruited to the cytoplasmic side of the cell membrane via its interaction with pore-forming potassium channel alpha subunits.</text>
</comment>
<comment type="alternative products">
    <event type="alternative splicing"/>
    <isoform>
        <id>Q9XT31-1</id>
        <name>KvB1.3</name>
        <sequence type="displayed"/>
    </isoform>
    <isoform>
        <id>Q9XT31-2</id>
        <name>KvB1.1</name>
        <sequence type="described" ref="VSP_001053"/>
    </isoform>
    <isoform>
        <id>Q9XT31-3</id>
        <name>KvB1.2</name>
        <sequence type="described" ref="VSP_001052"/>
    </isoform>
</comment>
<comment type="tissue specificity">
    <text>Detected in portal vein myocytes (at protein level) (PubMed:11717160).</text>
</comment>
<comment type="domain">
    <text evidence="2">The N-terminal domain of the beta subunit mediates closure of delayed rectifier potassium channels by physically obstructing the pore.</text>
</comment>
<comment type="similarity">
    <text evidence="7">Belongs to the shaker potassium channel beta subunit family.</text>
</comment>
<gene>
    <name type="primary">KCNAB1</name>
    <name type="synonym">KVBETA1</name>
</gene>
<protein>
    <recommendedName>
        <fullName>Voltage-gated potassium channel subunit beta-1</fullName>
        <ecNumber evidence="2">1.1.1.-</ecNumber>
    </recommendedName>
    <alternativeName>
        <fullName>K(+) channel subunit beta-1</fullName>
    </alternativeName>
    <alternativeName>
        <fullName>Kv-beta-1</fullName>
    </alternativeName>
</protein>
<dbReference type="EC" id="1.1.1.-" evidence="2"/>
<dbReference type="EMBL" id="AF131934">
    <property type="protein sequence ID" value="AAD37853.1"/>
    <property type="molecule type" value="mRNA"/>
</dbReference>
<dbReference type="EMBL" id="AF131935">
    <property type="protein sequence ID" value="AAD37854.1"/>
    <property type="molecule type" value="mRNA"/>
</dbReference>
<dbReference type="EMBL" id="AF131936">
    <property type="protein sequence ID" value="AAD37855.1"/>
    <property type="molecule type" value="mRNA"/>
</dbReference>
<dbReference type="RefSeq" id="NP_001164427.1">
    <molecule id="Q9XT31-1"/>
    <property type="nucleotide sequence ID" value="NM_001170956.1"/>
</dbReference>
<dbReference type="RefSeq" id="XP_008264420.1">
    <molecule id="Q9XT31-3"/>
    <property type="nucleotide sequence ID" value="XM_008266198.4"/>
</dbReference>
<dbReference type="RefSeq" id="XP_051714764.1">
    <molecule id="Q9XT31-2"/>
    <property type="nucleotide sequence ID" value="XM_051858804.2"/>
</dbReference>
<dbReference type="SMR" id="Q9XT31"/>
<dbReference type="FunCoup" id="Q9XT31">
    <property type="interactions" value="61"/>
</dbReference>
<dbReference type="STRING" id="9986.ENSOCUP00000044774"/>
<dbReference type="PaxDb" id="9986-ENSOCUP00000023218"/>
<dbReference type="Ensembl" id="ENSOCUT00000025128.2">
    <molecule id="Q9XT31-3"/>
    <property type="protein sequence ID" value="ENSOCUP00000023218.2"/>
    <property type="gene ID" value="ENSOCUG00000007885.4"/>
</dbReference>
<dbReference type="Ensembl" id="ENSOCUT00000034594.1">
    <molecule id="Q9XT31-1"/>
    <property type="protein sequence ID" value="ENSOCUP00000044774.1"/>
    <property type="gene ID" value="ENSOCUG00000007885.4"/>
</dbReference>
<dbReference type="GeneID" id="100328569"/>
<dbReference type="KEGG" id="ocu:100328569"/>
<dbReference type="CTD" id="7881"/>
<dbReference type="eggNOG" id="KOG1575">
    <property type="taxonomic scope" value="Eukaryota"/>
</dbReference>
<dbReference type="GeneTree" id="ENSGT00940000156760"/>
<dbReference type="InParanoid" id="Q9XT31"/>
<dbReference type="OrthoDB" id="1720422at2759"/>
<dbReference type="Proteomes" id="UP000001811">
    <property type="component" value="Chromosome 14"/>
</dbReference>
<dbReference type="Bgee" id="ENSOCUG00000007885">
    <property type="expression patterns" value="Expressed in aorta and 14 other cell types or tissues"/>
</dbReference>
<dbReference type="ExpressionAtlas" id="Q9XT31">
    <property type="expression patterns" value="baseline"/>
</dbReference>
<dbReference type="GO" id="GO:0009898">
    <property type="term" value="C:cytoplasmic side of plasma membrane"/>
    <property type="evidence" value="ECO:0000250"/>
    <property type="project" value="UniProtKB"/>
</dbReference>
<dbReference type="GO" id="GO:0005829">
    <property type="term" value="C:cytosol"/>
    <property type="evidence" value="ECO:0000250"/>
    <property type="project" value="UniProtKB"/>
</dbReference>
<dbReference type="GO" id="GO:0044224">
    <property type="term" value="C:juxtaparanode region of axon"/>
    <property type="evidence" value="ECO:0007669"/>
    <property type="project" value="TreeGrafter"/>
</dbReference>
<dbReference type="GO" id="GO:0034705">
    <property type="term" value="C:potassium channel complex"/>
    <property type="evidence" value="ECO:0000250"/>
    <property type="project" value="UniProtKB"/>
</dbReference>
<dbReference type="GO" id="GO:0008076">
    <property type="term" value="C:voltage-gated potassium channel complex"/>
    <property type="evidence" value="ECO:0007669"/>
    <property type="project" value="Ensembl"/>
</dbReference>
<dbReference type="GO" id="GO:0004033">
    <property type="term" value="F:aldo-keto reductase (NADPH) activity"/>
    <property type="evidence" value="ECO:0000250"/>
    <property type="project" value="UniProtKB"/>
</dbReference>
<dbReference type="GO" id="GO:0004090">
    <property type="term" value="F:carbonyl reductase (NADPH) activity"/>
    <property type="evidence" value="ECO:0007669"/>
    <property type="project" value="RHEA"/>
</dbReference>
<dbReference type="GO" id="GO:0140678">
    <property type="term" value="F:molecular function inhibitor activity"/>
    <property type="evidence" value="ECO:0007669"/>
    <property type="project" value="Ensembl"/>
</dbReference>
<dbReference type="GO" id="GO:0070402">
    <property type="term" value="F:NADPH binding"/>
    <property type="evidence" value="ECO:0000250"/>
    <property type="project" value="UniProtKB"/>
</dbReference>
<dbReference type="GO" id="GO:0015459">
    <property type="term" value="F:potassium channel regulator activity"/>
    <property type="evidence" value="ECO:0000250"/>
    <property type="project" value="UniProtKB"/>
</dbReference>
<dbReference type="GO" id="GO:0019904">
    <property type="term" value="F:protein domain specific binding"/>
    <property type="evidence" value="ECO:0007669"/>
    <property type="project" value="Ensembl"/>
</dbReference>
<dbReference type="GO" id="GO:0044325">
    <property type="term" value="F:transmembrane transporter binding"/>
    <property type="evidence" value="ECO:0007669"/>
    <property type="project" value="TreeGrafter"/>
</dbReference>
<dbReference type="GO" id="GO:0005249">
    <property type="term" value="F:voltage-gated potassium channel activity"/>
    <property type="evidence" value="ECO:0007669"/>
    <property type="project" value="InterPro"/>
</dbReference>
<dbReference type="GO" id="GO:0007611">
    <property type="term" value="P:learning or memory"/>
    <property type="evidence" value="ECO:0007669"/>
    <property type="project" value="Ensembl"/>
</dbReference>
<dbReference type="GO" id="GO:1902259">
    <property type="term" value="P:regulation of delayed rectifier potassium channel activity"/>
    <property type="evidence" value="ECO:0000250"/>
    <property type="project" value="UniProtKB"/>
</dbReference>
<dbReference type="GO" id="GO:1901379">
    <property type="term" value="P:regulation of potassium ion transmembrane transport"/>
    <property type="evidence" value="ECO:0000250"/>
    <property type="project" value="UniProtKB"/>
</dbReference>
<dbReference type="FunFam" id="3.20.20.100:FF:000001">
    <property type="entry name" value="voltage-gated potassium channel subunit beta-2 isoform X2"/>
    <property type="match status" value="1"/>
</dbReference>
<dbReference type="Gene3D" id="3.20.20.100">
    <property type="entry name" value="NADP-dependent oxidoreductase domain"/>
    <property type="match status" value="1"/>
</dbReference>
<dbReference type="InterPro" id="IPR005983">
    <property type="entry name" value="K_chnl_volt-dep_bsu_KCNAB"/>
</dbReference>
<dbReference type="InterPro" id="IPR005399">
    <property type="entry name" value="K_chnl_volt-dep_bsu_KCNAB-rel"/>
</dbReference>
<dbReference type="InterPro" id="IPR005400">
    <property type="entry name" value="K_chnl_volt-dep_bsu_KCNAB1"/>
</dbReference>
<dbReference type="InterPro" id="IPR023210">
    <property type="entry name" value="NADP_OxRdtase_dom"/>
</dbReference>
<dbReference type="InterPro" id="IPR036812">
    <property type="entry name" value="NADP_OxRdtase_dom_sf"/>
</dbReference>
<dbReference type="NCBIfam" id="TIGR01293">
    <property type="entry name" value="Kv_beta"/>
    <property type="match status" value="1"/>
</dbReference>
<dbReference type="PANTHER" id="PTHR43150">
    <property type="entry name" value="HYPERKINETIC, ISOFORM M"/>
    <property type="match status" value="1"/>
</dbReference>
<dbReference type="PANTHER" id="PTHR43150:SF7">
    <property type="entry name" value="VOLTAGE-GATED POTASSIUM CHANNEL SUBUNIT BETA-1"/>
    <property type="match status" value="1"/>
</dbReference>
<dbReference type="Pfam" id="PF00248">
    <property type="entry name" value="Aldo_ket_red"/>
    <property type="match status" value="1"/>
</dbReference>
<dbReference type="PRINTS" id="PR01578">
    <property type="entry name" value="KCNAB1CHANEL"/>
</dbReference>
<dbReference type="PRINTS" id="PR01577">
    <property type="entry name" value="KCNABCHANNEL"/>
</dbReference>
<dbReference type="SUPFAM" id="SSF51430">
    <property type="entry name" value="NAD(P)-linked oxidoreductase"/>
    <property type="match status" value="1"/>
</dbReference>
<keyword id="KW-0025">Alternative splicing</keyword>
<keyword id="KW-1003">Cell membrane</keyword>
<keyword id="KW-0963">Cytoplasm</keyword>
<keyword id="KW-0406">Ion transport</keyword>
<keyword id="KW-0472">Membrane</keyword>
<keyword id="KW-0521">NADP</keyword>
<keyword id="KW-0560">Oxidoreductase</keyword>
<keyword id="KW-0630">Potassium</keyword>
<keyword id="KW-0633">Potassium transport</keyword>
<keyword id="KW-1185">Reference proteome</keyword>
<keyword id="KW-0813">Transport</keyword>
<accession>Q9XT31</accession>
<accession>Q9XT32</accession>
<accession>Q9XT33</accession>
<name>KCAB1_RABIT</name>
<sequence length="419" mass="46537">MLAARTGAAGSQIAEESSKLRKQAAFSGGSKDRSPKKASENVKDSSLSPSGQSQVRARQLALLREVEMNWYLKLCELSSEHTTAYTTGMPHRNLGKSGLRVSCLGLGTWVTFGGQISDEVAERLMTIAYESGVNLFDTAEVYAAGKAEVILGSIIKKKGWRRSSLVITTKLYWGGKAETERGLSRKHIIEGLKGSLQRLQLEYVDVVFANRPDSNTPMEEIVRAMTHVINQGMAMYWGTSRWSAMEIMEAYSVARQFNMIPPVCEQAEYHLFQREKVEVQLPELYHKIGVGAMTWSPLACGIISGKYGNGVPESSRASLKCYQWLKERIVSEEGRKQQNKLKDLSPIAERLGCTLPQLAVAWCLRNEGVSSVLLGSSTPEQLIENLGAIQVLPKMTSHVVNEIDNILRNKPYSKKDYRS</sequence>